<accession>Q8K2J9</accession>
<accession>Q3UIB3</accession>
<protein>
    <recommendedName>
        <fullName>BTB/POZ domain-containing protein 6</fullName>
    </recommendedName>
</protein>
<proteinExistence type="evidence at transcript level"/>
<comment type="function">
    <text evidence="1 2">Adapter protein for the cul3 E3 ubiquitin-protein ligase complex (By similarity). Involved in late neuronal development and muscle formation (By similarity).</text>
</comment>
<comment type="subcellular location">
    <subcellularLocation>
        <location evidence="2">Cytoplasm</location>
    </subcellularLocation>
    <text evidence="2">Found in punctated bodies in the cytoplasm.</text>
</comment>
<comment type="alternative products">
    <event type="alternative splicing"/>
    <isoform>
        <id>Q8K2J9-2</id>
        <name>1</name>
        <sequence type="displayed"/>
    </isoform>
    <isoform>
        <id>Q8K2J9-1</id>
        <name>2</name>
        <sequence type="described" ref="VSP_061437"/>
    </isoform>
</comment>
<comment type="sequence caution" evidence="5">
    <conflict type="erroneous initiation">
        <sequence resource="EMBL-CDS" id="AAH31195"/>
    </conflict>
    <text>Truncated N-terminus.</text>
</comment>
<sequence>MLLPLACLHGRVAQCLTSLLVLAEPFPRPRRGAKARGAAPTSAEPAPAVAKMAAELYPPASPSAATATDIANSNAAGAAESTKVGLCCPPCLAPAPLPPLPAPPLPDNNNPESPNWQSFHPTLRERNALMFNNELMADVHFIVGALGAARRVPAHKYVLAVGSSVFYAMFYGDLAEVKSEIHIPDVEPAAFLVLLKYMYSDEIDLEADTVLATLYAAKKYIVPALAKACVNFLETSLEAKNACVLLSQSRLFEEPELTQRCWEVIDAQAEMALRSEGFCEIDRQTLEIIVTREALNTKEAVVFEAVLNWAEAECKRQGLPVTPHNKRHVLGRALYLVRIPTMTLEEFANGAAQSDILTLEETHNIFLWYTAAKKPLLDFPLTKRKGLAPQRCHRFQSSAYRSNQWRYRGRCDSIQFAVDRRVFIAGLGLYGSSSGKAEYSVKIELKRLGMVLAQNLTKFVSDGSSNTFPVWFEHPVQVEQDTFYTASAVLDGSELSYFGQEGMTEVQCGKVAFQFQCSSDSTNGTGVQGGQIPELIFYA</sequence>
<organism>
    <name type="scientific">Mus musculus</name>
    <name type="common">Mouse</name>
    <dbReference type="NCBI Taxonomy" id="10090"/>
    <lineage>
        <taxon>Eukaryota</taxon>
        <taxon>Metazoa</taxon>
        <taxon>Chordata</taxon>
        <taxon>Craniata</taxon>
        <taxon>Vertebrata</taxon>
        <taxon>Euteleostomi</taxon>
        <taxon>Mammalia</taxon>
        <taxon>Eutheria</taxon>
        <taxon>Euarchontoglires</taxon>
        <taxon>Glires</taxon>
        <taxon>Rodentia</taxon>
        <taxon>Myomorpha</taxon>
        <taxon>Muroidea</taxon>
        <taxon>Muridae</taxon>
        <taxon>Murinae</taxon>
        <taxon>Mus</taxon>
        <taxon>Mus</taxon>
    </lineage>
</organism>
<reference key="1">
    <citation type="journal article" date="2005" name="Science">
        <title>The transcriptional landscape of the mammalian genome.</title>
        <authorList>
            <person name="Carninci P."/>
            <person name="Kasukawa T."/>
            <person name="Katayama S."/>
            <person name="Gough J."/>
            <person name="Frith M.C."/>
            <person name="Maeda N."/>
            <person name="Oyama R."/>
            <person name="Ravasi T."/>
            <person name="Lenhard B."/>
            <person name="Wells C."/>
            <person name="Kodzius R."/>
            <person name="Shimokawa K."/>
            <person name="Bajic V.B."/>
            <person name="Brenner S.E."/>
            <person name="Batalov S."/>
            <person name="Forrest A.R."/>
            <person name="Zavolan M."/>
            <person name="Davis M.J."/>
            <person name="Wilming L.G."/>
            <person name="Aidinis V."/>
            <person name="Allen J.E."/>
            <person name="Ambesi-Impiombato A."/>
            <person name="Apweiler R."/>
            <person name="Aturaliya R.N."/>
            <person name="Bailey T.L."/>
            <person name="Bansal M."/>
            <person name="Baxter L."/>
            <person name="Beisel K.W."/>
            <person name="Bersano T."/>
            <person name="Bono H."/>
            <person name="Chalk A.M."/>
            <person name="Chiu K.P."/>
            <person name="Choudhary V."/>
            <person name="Christoffels A."/>
            <person name="Clutterbuck D.R."/>
            <person name="Crowe M.L."/>
            <person name="Dalla E."/>
            <person name="Dalrymple B.P."/>
            <person name="de Bono B."/>
            <person name="Della Gatta G."/>
            <person name="di Bernardo D."/>
            <person name="Down T."/>
            <person name="Engstrom P."/>
            <person name="Fagiolini M."/>
            <person name="Faulkner G."/>
            <person name="Fletcher C.F."/>
            <person name="Fukushima T."/>
            <person name="Furuno M."/>
            <person name="Futaki S."/>
            <person name="Gariboldi M."/>
            <person name="Georgii-Hemming P."/>
            <person name="Gingeras T.R."/>
            <person name="Gojobori T."/>
            <person name="Green R.E."/>
            <person name="Gustincich S."/>
            <person name="Harbers M."/>
            <person name="Hayashi Y."/>
            <person name="Hensch T.K."/>
            <person name="Hirokawa N."/>
            <person name="Hill D."/>
            <person name="Huminiecki L."/>
            <person name="Iacono M."/>
            <person name="Ikeo K."/>
            <person name="Iwama A."/>
            <person name="Ishikawa T."/>
            <person name="Jakt M."/>
            <person name="Kanapin A."/>
            <person name="Katoh M."/>
            <person name="Kawasawa Y."/>
            <person name="Kelso J."/>
            <person name="Kitamura H."/>
            <person name="Kitano H."/>
            <person name="Kollias G."/>
            <person name="Krishnan S.P."/>
            <person name="Kruger A."/>
            <person name="Kummerfeld S.K."/>
            <person name="Kurochkin I.V."/>
            <person name="Lareau L.F."/>
            <person name="Lazarevic D."/>
            <person name="Lipovich L."/>
            <person name="Liu J."/>
            <person name="Liuni S."/>
            <person name="McWilliam S."/>
            <person name="Madan Babu M."/>
            <person name="Madera M."/>
            <person name="Marchionni L."/>
            <person name="Matsuda H."/>
            <person name="Matsuzawa S."/>
            <person name="Miki H."/>
            <person name="Mignone F."/>
            <person name="Miyake S."/>
            <person name="Morris K."/>
            <person name="Mottagui-Tabar S."/>
            <person name="Mulder N."/>
            <person name="Nakano N."/>
            <person name="Nakauchi H."/>
            <person name="Ng P."/>
            <person name="Nilsson R."/>
            <person name="Nishiguchi S."/>
            <person name="Nishikawa S."/>
            <person name="Nori F."/>
            <person name="Ohara O."/>
            <person name="Okazaki Y."/>
            <person name="Orlando V."/>
            <person name="Pang K.C."/>
            <person name="Pavan W.J."/>
            <person name="Pavesi G."/>
            <person name="Pesole G."/>
            <person name="Petrovsky N."/>
            <person name="Piazza S."/>
            <person name="Reed J."/>
            <person name="Reid J.F."/>
            <person name="Ring B.Z."/>
            <person name="Ringwald M."/>
            <person name="Rost B."/>
            <person name="Ruan Y."/>
            <person name="Salzberg S.L."/>
            <person name="Sandelin A."/>
            <person name="Schneider C."/>
            <person name="Schoenbach C."/>
            <person name="Sekiguchi K."/>
            <person name="Semple C.A."/>
            <person name="Seno S."/>
            <person name="Sessa L."/>
            <person name="Sheng Y."/>
            <person name="Shibata Y."/>
            <person name="Shimada H."/>
            <person name="Shimada K."/>
            <person name="Silva D."/>
            <person name="Sinclair B."/>
            <person name="Sperling S."/>
            <person name="Stupka E."/>
            <person name="Sugiura K."/>
            <person name="Sultana R."/>
            <person name="Takenaka Y."/>
            <person name="Taki K."/>
            <person name="Tammoja K."/>
            <person name="Tan S.L."/>
            <person name="Tang S."/>
            <person name="Taylor M.S."/>
            <person name="Tegner J."/>
            <person name="Teichmann S.A."/>
            <person name="Ueda H.R."/>
            <person name="van Nimwegen E."/>
            <person name="Verardo R."/>
            <person name="Wei C.L."/>
            <person name="Yagi K."/>
            <person name="Yamanishi H."/>
            <person name="Zabarovsky E."/>
            <person name="Zhu S."/>
            <person name="Zimmer A."/>
            <person name="Hide W."/>
            <person name="Bult C."/>
            <person name="Grimmond S.M."/>
            <person name="Teasdale R.D."/>
            <person name="Liu E.T."/>
            <person name="Brusic V."/>
            <person name="Quackenbush J."/>
            <person name="Wahlestedt C."/>
            <person name="Mattick J.S."/>
            <person name="Hume D.A."/>
            <person name="Kai C."/>
            <person name="Sasaki D."/>
            <person name="Tomaru Y."/>
            <person name="Fukuda S."/>
            <person name="Kanamori-Katayama M."/>
            <person name="Suzuki M."/>
            <person name="Aoki J."/>
            <person name="Arakawa T."/>
            <person name="Iida J."/>
            <person name="Imamura K."/>
            <person name="Itoh M."/>
            <person name="Kato T."/>
            <person name="Kawaji H."/>
            <person name="Kawagashira N."/>
            <person name="Kawashima T."/>
            <person name="Kojima M."/>
            <person name="Kondo S."/>
            <person name="Konno H."/>
            <person name="Nakano K."/>
            <person name="Ninomiya N."/>
            <person name="Nishio T."/>
            <person name="Okada M."/>
            <person name="Plessy C."/>
            <person name="Shibata K."/>
            <person name="Shiraki T."/>
            <person name="Suzuki S."/>
            <person name="Tagami M."/>
            <person name="Waki K."/>
            <person name="Watahiki A."/>
            <person name="Okamura-Oho Y."/>
            <person name="Suzuki H."/>
            <person name="Kawai J."/>
            <person name="Hayashizaki Y."/>
        </authorList>
    </citation>
    <scope>NUCLEOTIDE SEQUENCE [LARGE SCALE MRNA] (ISOFORM 2)</scope>
    <source>
        <strain>C57BL/6J</strain>
        <tissue>Kidney</tissue>
    </source>
</reference>
<reference key="2">
    <citation type="submission" date="2005-09" db="EMBL/GenBank/DDBJ databases">
        <authorList>
            <person name="Mural R.J."/>
            <person name="Adams M.D."/>
            <person name="Myers E.W."/>
            <person name="Smith H.O."/>
            <person name="Venter J.C."/>
        </authorList>
    </citation>
    <scope>NUCLEOTIDE SEQUENCE [LARGE SCALE GENOMIC DNA]</scope>
</reference>
<reference key="3">
    <citation type="journal article" date="2004" name="Genome Res.">
        <title>The status, quality, and expansion of the NIH full-length cDNA project: the Mammalian Gene Collection (MGC).</title>
        <authorList>
            <consortium name="The MGC Project Team"/>
        </authorList>
    </citation>
    <scope>NUCLEOTIDE SEQUENCE [LARGE SCALE MRNA] (ISOFORM 1)</scope>
</reference>
<keyword id="KW-0025">Alternative splicing</keyword>
<keyword id="KW-0963">Cytoplasm</keyword>
<keyword id="KW-1185">Reference proteome</keyword>
<keyword id="KW-0732">Signal</keyword>
<evidence type="ECO:0000250" key="1">
    <source>
        <dbReference type="UniProtKB" id="A9JRD8"/>
    </source>
</evidence>
<evidence type="ECO:0000250" key="2">
    <source>
        <dbReference type="UniProtKB" id="Q2LE78"/>
    </source>
</evidence>
<evidence type="ECO:0000255" key="3"/>
<evidence type="ECO:0000255" key="4">
    <source>
        <dbReference type="PROSITE-ProRule" id="PRU00037"/>
    </source>
</evidence>
<evidence type="ECO:0000305" key="5"/>
<name>BTBD6_MOUSE</name>
<dbReference type="EMBL" id="AK146991">
    <property type="protein sequence ID" value="BAE27593.1"/>
    <property type="molecule type" value="mRNA"/>
</dbReference>
<dbReference type="EMBL" id="CH466549">
    <property type="protein sequence ID" value="EDL18570.1"/>
    <property type="molecule type" value="Genomic_DNA"/>
</dbReference>
<dbReference type="EMBL" id="BC031195">
    <property type="protein sequence ID" value="AAH31195.1"/>
    <property type="status" value="ALT_INIT"/>
    <property type="molecule type" value="mRNA"/>
</dbReference>
<dbReference type="CCDS" id="CCDS49193.1">
    <molecule id="Q8K2J9-2"/>
</dbReference>
<dbReference type="CCDS" id="CCDS49194.1">
    <molecule id="Q8K2J9-1"/>
</dbReference>
<dbReference type="RefSeq" id="NP_001139372.1">
    <molecule id="Q8K2J9-1"/>
    <property type="nucleotide sequence ID" value="NM_001145900.1"/>
</dbReference>
<dbReference type="RefSeq" id="NP_964008.2">
    <molecule id="Q8K2J9-2"/>
    <property type="nucleotide sequence ID" value="NM_201646.2"/>
</dbReference>
<dbReference type="RefSeq" id="XP_006516119.1">
    <molecule id="Q8K2J9-1"/>
    <property type="nucleotide sequence ID" value="XM_006516056.4"/>
</dbReference>
<dbReference type="SMR" id="Q8K2J9"/>
<dbReference type="FunCoup" id="Q8K2J9">
    <property type="interactions" value="814"/>
</dbReference>
<dbReference type="STRING" id="10090.ENSMUSP00000002880"/>
<dbReference type="GlyGen" id="Q8K2J9">
    <property type="glycosylation" value="2 sites, 1 N-linked glycan (1 site)"/>
</dbReference>
<dbReference type="PhosphoSitePlus" id="Q8K2J9"/>
<dbReference type="PaxDb" id="10090-ENSMUSP00000002880"/>
<dbReference type="ProteomicsDB" id="273559"/>
<dbReference type="Antibodypedia" id="15012">
    <property type="antibodies" value="156 antibodies from 29 providers"/>
</dbReference>
<dbReference type="DNASU" id="399566"/>
<dbReference type="Ensembl" id="ENSMUST00000002880.7">
    <molecule id="Q8K2J9-2"/>
    <property type="protein sequence ID" value="ENSMUSP00000002880.7"/>
    <property type="gene ID" value="ENSMUSG00000002803.15"/>
</dbReference>
<dbReference type="Ensembl" id="ENSMUST00000165079.8">
    <molecule id="Q8K2J9-1"/>
    <property type="protein sequence ID" value="ENSMUSP00000127286.2"/>
    <property type="gene ID" value="ENSMUSG00000002803.15"/>
</dbReference>
<dbReference type="Ensembl" id="ENSMUST00000221104.2">
    <molecule id="Q8K2J9-1"/>
    <property type="protein sequence ID" value="ENSMUSP00000152889.2"/>
    <property type="gene ID" value="ENSMUSG00000002803.15"/>
</dbReference>
<dbReference type="GeneID" id="399566"/>
<dbReference type="KEGG" id="mmu:399566"/>
<dbReference type="UCSC" id="uc011yvh.1">
    <molecule id="Q8K2J9-2"/>
    <property type="organism name" value="mouse"/>
</dbReference>
<dbReference type="AGR" id="MGI:3026623"/>
<dbReference type="CTD" id="90135"/>
<dbReference type="MGI" id="MGI:3026623">
    <property type="gene designation" value="Btbd6"/>
</dbReference>
<dbReference type="VEuPathDB" id="HostDB:ENSMUSG00000002803"/>
<dbReference type="eggNOG" id="KOG2075">
    <property type="taxonomic scope" value="Eukaryota"/>
</dbReference>
<dbReference type="GeneTree" id="ENSGT00940000155720"/>
<dbReference type="HOGENOM" id="CLU_015899_2_1_1"/>
<dbReference type="InParanoid" id="Q8K2J9"/>
<dbReference type="OMA" id="EPASWQC"/>
<dbReference type="OrthoDB" id="636773at2759"/>
<dbReference type="PhylomeDB" id="Q8K2J9"/>
<dbReference type="Reactome" id="R-MMU-8951664">
    <property type="pathway name" value="Neddylation"/>
</dbReference>
<dbReference type="Reactome" id="R-MMU-983168">
    <property type="pathway name" value="Antigen processing: Ubiquitination &amp; Proteasome degradation"/>
</dbReference>
<dbReference type="BioGRID-ORCS" id="399566">
    <property type="hits" value="3 hits in 75 CRISPR screens"/>
</dbReference>
<dbReference type="PRO" id="PR:Q8K2J9"/>
<dbReference type="Proteomes" id="UP000000589">
    <property type="component" value="Chromosome 12"/>
</dbReference>
<dbReference type="RNAct" id="Q8K2J9">
    <property type="molecule type" value="protein"/>
</dbReference>
<dbReference type="Bgee" id="ENSMUSG00000002803">
    <property type="expression patterns" value="Expressed in embryonic brain and 221 other cell types or tissues"/>
</dbReference>
<dbReference type="ExpressionAtlas" id="Q8K2J9">
    <property type="expression patterns" value="baseline and differential"/>
</dbReference>
<dbReference type="GO" id="GO:0005737">
    <property type="term" value="C:cytoplasm"/>
    <property type="evidence" value="ECO:0007669"/>
    <property type="project" value="UniProtKB-SubCell"/>
</dbReference>
<dbReference type="CDD" id="cd18525">
    <property type="entry name" value="BACK_BTBD6"/>
    <property type="match status" value="1"/>
</dbReference>
<dbReference type="CDD" id="cd18349">
    <property type="entry name" value="BTB_POZ_BTBD6"/>
    <property type="match status" value="1"/>
</dbReference>
<dbReference type="FunFam" id="1.25.40.420:FF:000003">
    <property type="entry name" value="BTB/POZ domain-containing protein 3"/>
    <property type="match status" value="1"/>
</dbReference>
<dbReference type="FunFam" id="2.60.120.820:FF:000001">
    <property type="entry name" value="BTB/POZ domain-containing protein 3"/>
    <property type="match status" value="1"/>
</dbReference>
<dbReference type="FunFam" id="3.30.710.10:FF:000015">
    <property type="entry name" value="BTB/POZ domain-containing protein 3"/>
    <property type="match status" value="1"/>
</dbReference>
<dbReference type="Gene3D" id="1.25.40.420">
    <property type="match status" value="1"/>
</dbReference>
<dbReference type="Gene3D" id="2.60.120.820">
    <property type="entry name" value="PHR domain"/>
    <property type="match status" value="1"/>
</dbReference>
<dbReference type="Gene3D" id="3.30.710.10">
    <property type="entry name" value="Potassium Channel Kv1.1, Chain A"/>
    <property type="match status" value="1"/>
</dbReference>
<dbReference type="InterPro" id="IPR011705">
    <property type="entry name" value="BACK"/>
</dbReference>
<dbReference type="InterPro" id="IPR000210">
    <property type="entry name" value="BTB/POZ_dom"/>
</dbReference>
<dbReference type="InterPro" id="IPR049738">
    <property type="entry name" value="BTB_POZ_BTBD6"/>
</dbReference>
<dbReference type="InterPro" id="IPR012983">
    <property type="entry name" value="PHR"/>
</dbReference>
<dbReference type="InterPro" id="IPR038648">
    <property type="entry name" value="PHR_sf"/>
</dbReference>
<dbReference type="InterPro" id="IPR011333">
    <property type="entry name" value="SKP1/BTB/POZ_sf"/>
</dbReference>
<dbReference type="PANTHER" id="PTHR45774">
    <property type="entry name" value="BTB/POZ DOMAIN-CONTAINING"/>
    <property type="match status" value="1"/>
</dbReference>
<dbReference type="PANTHER" id="PTHR45774:SF5">
    <property type="entry name" value="BTB_POZ DOMAIN-CONTAINING PROTEIN 6"/>
    <property type="match status" value="1"/>
</dbReference>
<dbReference type="Pfam" id="PF07707">
    <property type="entry name" value="BACK"/>
    <property type="match status" value="1"/>
</dbReference>
<dbReference type="Pfam" id="PF00651">
    <property type="entry name" value="BTB"/>
    <property type="match status" value="1"/>
</dbReference>
<dbReference type="Pfam" id="PF08005">
    <property type="entry name" value="PHR"/>
    <property type="match status" value="1"/>
</dbReference>
<dbReference type="SMART" id="SM00875">
    <property type="entry name" value="BACK"/>
    <property type="match status" value="1"/>
</dbReference>
<dbReference type="SMART" id="SM00225">
    <property type="entry name" value="BTB"/>
    <property type="match status" value="1"/>
</dbReference>
<dbReference type="SUPFAM" id="SSF54695">
    <property type="entry name" value="POZ domain"/>
    <property type="match status" value="1"/>
</dbReference>
<dbReference type="PROSITE" id="PS50097">
    <property type="entry name" value="BTB"/>
    <property type="match status" value="1"/>
</dbReference>
<gene>
    <name type="primary">Btbd6</name>
</gene>
<feature type="signal peptide" evidence="3">
    <location>
        <begin position="1"/>
        <end position="23"/>
    </location>
</feature>
<feature type="chain" id="PRO_0000186214" description="BTB/POZ domain-containing protein 6" evidence="3">
    <location>
        <begin position="24"/>
        <end position="539"/>
    </location>
</feature>
<feature type="domain" description="BTB" evidence="4">
    <location>
        <begin position="137"/>
        <end position="207"/>
    </location>
</feature>
<feature type="splice variant" id="VSP_061437" description="In isoform 2.">
    <location>
        <begin position="1"/>
        <end position="51"/>
    </location>
</feature>